<protein>
    <recommendedName>
        <fullName evidence="1">UDP-N-acetylenolpyruvoylglucosamine reductase</fullName>
        <ecNumber evidence="1">1.3.1.98</ecNumber>
    </recommendedName>
    <alternativeName>
        <fullName evidence="1">UDP-N-acetylmuramate dehydrogenase</fullName>
    </alternativeName>
</protein>
<proteinExistence type="inferred from homology"/>
<feature type="chain" id="PRO_0000224702" description="UDP-N-acetylenolpyruvoylglucosamine reductase">
    <location>
        <begin position="1"/>
        <end position="299"/>
    </location>
</feature>
<feature type="domain" description="FAD-binding PCMH-type" evidence="1">
    <location>
        <begin position="29"/>
        <end position="193"/>
    </location>
</feature>
<feature type="active site" evidence="1">
    <location>
        <position position="173"/>
    </location>
</feature>
<feature type="active site" description="Proton donor" evidence="1">
    <location>
        <position position="222"/>
    </location>
</feature>
<feature type="active site" evidence="1">
    <location>
        <position position="292"/>
    </location>
</feature>
<name>MURB_SYNC1</name>
<organism>
    <name type="scientific">Syntrophotalea carbinolica (strain DSM 2380 / NBRC 103641 / GraBd1)</name>
    <name type="common">Pelobacter carbinolicus</name>
    <dbReference type="NCBI Taxonomy" id="338963"/>
    <lineage>
        <taxon>Bacteria</taxon>
        <taxon>Pseudomonadati</taxon>
        <taxon>Thermodesulfobacteriota</taxon>
        <taxon>Desulfuromonadia</taxon>
        <taxon>Desulfuromonadales</taxon>
        <taxon>Syntrophotaleaceae</taxon>
        <taxon>Syntrophotalea</taxon>
    </lineage>
</organism>
<gene>
    <name evidence="1" type="primary">murB</name>
    <name type="ordered locus">Pcar_2200</name>
</gene>
<dbReference type="EC" id="1.3.1.98" evidence="1"/>
<dbReference type="EMBL" id="CP000142">
    <property type="protein sequence ID" value="ABA89439.1"/>
    <property type="molecule type" value="Genomic_DNA"/>
</dbReference>
<dbReference type="RefSeq" id="WP_011341954.1">
    <property type="nucleotide sequence ID" value="NC_007498.2"/>
</dbReference>
<dbReference type="SMR" id="Q3A2G8"/>
<dbReference type="STRING" id="338963.Pcar_2200"/>
<dbReference type="KEGG" id="pca:Pcar_2200"/>
<dbReference type="eggNOG" id="COG0812">
    <property type="taxonomic scope" value="Bacteria"/>
</dbReference>
<dbReference type="HOGENOM" id="CLU_035304_1_1_7"/>
<dbReference type="OrthoDB" id="9804753at2"/>
<dbReference type="UniPathway" id="UPA00219"/>
<dbReference type="Proteomes" id="UP000002534">
    <property type="component" value="Chromosome"/>
</dbReference>
<dbReference type="GO" id="GO:0005829">
    <property type="term" value="C:cytosol"/>
    <property type="evidence" value="ECO:0007669"/>
    <property type="project" value="TreeGrafter"/>
</dbReference>
<dbReference type="GO" id="GO:0071949">
    <property type="term" value="F:FAD binding"/>
    <property type="evidence" value="ECO:0007669"/>
    <property type="project" value="InterPro"/>
</dbReference>
<dbReference type="GO" id="GO:0008762">
    <property type="term" value="F:UDP-N-acetylmuramate dehydrogenase activity"/>
    <property type="evidence" value="ECO:0007669"/>
    <property type="project" value="UniProtKB-UniRule"/>
</dbReference>
<dbReference type="GO" id="GO:0051301">
    <property type="term" value="P:cell division"/>
    <property type="evidence" value="ECO:0007669"/>
    <property type="project" value="UniProtKB-KW"/>
</dbReference>
<dbReference type="GO" id="GO:0071555">
    <property type="term" value="P:cell wall organization"/>
    <property type="evidence" value="ECO:0007669"/>
    <property type="project" value="UniProtKB-KW"/>
</dbReference>
<dbReference type="GO" id="GO:0009252">
    <property type="term" value="P:peptidoglycan biosynthetic process"/>
    <property type="evidence" value="ECO:0007669"/>
    <property type="project" value="UniProtKB-UniRule"/>
</dbReference>
<dbReference type="GO" id="GO:0008360">
    <property type="term" value="P:regulation of cell shape"/>
    <property type="evidence" value="ECO:0007669"/>
    <property type="project" value="UniProtKB-KW"/>
</dbReference>
<dbReference type="Gene3D" id="3.30.465.10">
    <property type="match status" value="1"/>
</dbReference>
<dbReference type="Gene3D" id="3.90.78.10">
    <property type="entry name" value="UDP-N-acetylenolpyruvoylglucosamine reductase, C-terminal domain"/>
    <property type="match status" value="1"/>
</dbReference>
<dbReference type="Gene3D" id="3.30.43.10">
    <property type="entry name" value="Uridine Diphospho-n-acetylenolpyruvylglucosamine Reductase, domain 2"/>
    <property type="match status" value="1"/>
</dbReference>
<dbReference type="HAMAP" id="MF_00037">
    <property type="entry name" value="MurB"/>
    <property type="match status" value="1"/>
</dbReference>
<dbReference type="InterPro" id="IPR016166">
    <property type="entry name" value="FAD-bd_PCMH"/>
</dbReference>
<dbReference type="InterPro" id="IPR036318">
    <property type="entry name" value="FAD-bd_PCMH-like_sf"/>
</dbReference>
<dbReference type="InterPro" id="IPR016167">
    <property type="entry name" value="FAD-bd_PCMH_sub1"/>
</dbReference>
<dbReference type="InterPro" id="IPR016169">
    <property type="entry name" value="FAD-bd_PCMH_sub2"/>
</dbReference>
<dbReference type="InterPro" id="IPR003170">
    <property type="entry name" value="MurB"/>
</dbReference>
<dbReference type="InterPro" id="IPR011601">
    <property type="entry name" value="MurB_C"/>
</dbReference>
<dbReference type="InterPro" id="IPR036635">
    <property type="entry name" value="MurB_C_sf"/>
</dbReference>
<dbReference type="InterPro" id="IPR006094">
    <property type="entry name" value="Oxid_FAD_bind_N"/>
</dbReference>
<dbReference type="NCBIfam" id="TIGR00179">
    <property type="entry name" value="murB"/>
    <property type="match status" value="1"/>
</dbReference>
<dbReference type="NCBIfam" id="NF010480">
    <property type="entry name" value="PRK13905.1"/>
    <property type="match status" value="1"/>
</dbReference>
<dbReference type="PANTHER" id="PTHR21071">
    <property type="entry name" value="UDP-N-ACETYLENOLPYRUVOYLGLUCOSAMINE REDUCTASE"/>
    <property type="match status" value="1"/>
</dbReference>
<dbReference type="PANTHER" id="PTHR21071:SF4">
    <property type="entry name" value="UDP-N-ACETYLENOLPYRUVOYLGLUCOSAMINE REDUCTASE"/>
    <property type="match status" value="1"/>
</dbReference>
<dbReference type="Pfam" id="PF01565">
    <property type="entry name" value="FAD_binding_4"/>
    <property type="match status" value="1"/>
</dbReference>
<dbReference type="Pfam" id="PF02873">
    <property type="entry name" value="MurB_C"/>
    <property type="match status" value="1"/>
</dbReference>
<dbReference type="SUPFAM" id="SSF56176">
    <property type="entry name" value="FAD-binding/transporter-associated domain-like"/>
    <property type="match status" value="1"/>
</dbReference>
<dbReference type="SUPFAM" id="SSF56194">
    <property type="entry name" value="Uridine diphospho-N-Acetylenolpyruvylglucosamine reductase, MurB, C-terminal domain"/>
    <property type="match status" value="1"/>
</dbReference>
<dbReference type="PROSITE" id="PS51387">
    <property type="entry name" value="FAD_PCMH"/>
    <property type="match status" value="1"/>
</dbReference>
<reference key="1">
    <citation type="submission" date="2005-10" db="EMBL/GenBank/DDBJ databases">
        <title>Complete sequence of Pelobacter carbinolicus DSM 2380.</title>
        <authorList>
            <person name="Copeland A."/>
            <person name="Lucas S."/>
            <person name="Lapidus A."/>
            <person name="Barry K."/>
            <person name="Detter J.C."/>
            <person name="Glavina T."/>
            <person name="Hammon N."/>
            <person name="Israni S."/>
            <person name="Pitluck S."/>
            <person name="Chertkov O."/>
            <person name="Schmutz J."/>
            <person name="Larimer F."/>
            <person name="Land M."/>
            <person name="Kyrpides N."/>
            <person name="Ivanova N."/>
            <person name="Richardson P."/>
        </authorList>
    </citation>
    <scope>NUCLEOTIDE SEQUENCE [LARGE SCALE GENOMIC DNA]</scope>
    <source>
        <strain>DSM 2380 / NBRC 103641 / GraBd1</strain>
    </source>
</reference>
<comment type="function">
    <text evidence="1">Cell wall formation.</text>
</comment>
<comment type="catalytic activity">
    <reaction evidence="1">
        <text>UDP-N-acetyl-alpha-D-muramate + NADP(+) = UDP-N-acetyl-3-O-(1-carboxyvinyl)-alpha-D-glucosamine + NADPH + H(+)</text>
        <dbReference type="Rhea" id="RHEA:12248"/>
        <dbReference type="ChEBI" id="CHEBI:15378"/>
        <dbReference type="ChEBI" id="CHEBI:57783"/>
        <dbReference type="ChEBI" id="CHEBI:58349"/>
        <dbReference type="ChEBI" id="CHEBI:68483"/>
        <dbReference type="ChEBI" id="CHEBI:70757"/>
        <dbReference type="EC" id="1.3.1.98"/>
    </reaction>
</comment>
<comment type="cofactor">
    <cofactor evidence="1">
        <name>FAD</name>
        <dbReference type="ChEBI" id="CHEBI:57692"/>
    </cofactor>
</comment>
<comment type="pathway">
    <text evidence="1">Cell wall biogenesis; peptidoglycan biosynthesis.</text>
</comment>
<comment type="subcellular location">
    <subcellularLocation>
        <location evidence="1">Cytoplasm</location>
    </subcellularLocation>
</comment>
<comment type="similarity">
    <text evidence="1">Belongs to the MurB family.</text>
</comment>
<keyword id="KW-0131">Cell cycle</keyword>
<keyword id="KW-0132">Cell division</keyword>
<keyword id="KW-0133">Cell shape</keyword>
<keyword id="KW-0961">Cell wall biogenesis/degradation</keyword>
<keyword id="KW-0963">Cytoplasm</keyword>
<keyword id="KW-0274">FAD</keyword>
<keyword id="KW-0285">Flavoprotein</keyword>
<keyword id="KW-0521">NADP</keyword>
<keyword id="KW-0560">Oxidoreductase</keyword>
<keyword id="KW-0573">Peptidoglycan synthesis</keyword>
<keyword id="KW-1185">Reference proteome</keyword>
<evidence type="ECO:0000255" key="1">
    <source>
        <dbReference type="HAMAP-Rule" id="MF_00037"/>
    </source>
</evidence>
<sequence>MHVLAARLGEILHSPVQLGEPLSRHTSWRIGGPAEIFLSPCDTKELVASLELLAQVGMPWIALGAGTNVLVRDGGFRGAVIHTGGLQDMAFDADGRARVGGGVPVMRLIRHCVERGLAGLEDLAGLPATIGGAVVMNAGAGKQDLAGVLDGAFLAGPSGVEYWPADRLELGYRTSAVPPGRIVTAASLRFRKASPEVLETYVRQRVQQRRKAQGVGKPNAGSVFKNPPGQQAWRLIDSCELRGFAVGGAQVSEKHANFIVNRGGARAEDVLRLIAEIQKKVEKRTGIVLEPEVKVVGQA</sequence>
<accession>Q3A2G8</accession>